<sequence length="201" mass="23058">EFRETAGGVMTKLIERNTTIPTKKNQIFTTYADNQPGVLIQVYEGERAMTKDNNLLGKFQLEGIPPAPRSVPQIEVTFDIDANGILNVTALDKGTGKQNQITITNDKGRLSKDDIDRMVNDAEKYKEEDEQNKNRIEARNNLENYCYNVKNTLQDENLKTKIPKDDSEKCMKTVKSVLDWLEKNQTAETEEYNEKEKDTEF</sequence>
<protein>
    <recommendedName>
        <fullName>Heat shock 70 kDa protein PPF203</fullName>
    </recommendedName>
</protein>
<evidence type="ECO:0000305" key="1"/>
<organism>
    <name type="scientific">Plasmodium falciparum</name>
    <dbReference type="NCBI Taxonomy" id="5833"/>
    <lineage>
        <taxon>Eukaryota</taxon>
        <taxon>Sar</taxon>
        <taxon>Alveolata</taxon>
        <taxon>Apicomplexa</taxon>
        <taxon>Aconoidasida</taxon>
        <taxon>Haemosporida</taxon>
        <taxon>Plasmodiidae</taxon>
        <taxon>Plasmodium</taxon>
        <taxon>Plasmodium (Laverania)</taxon>
    </lineage>
</organism>
<name>HSP73_PLAFA</name>
<accession>P12078</accession>
<reference key="1">
    <citation type="journal article" date="1989" name="Nucleic Acids Res.">
        <title>The sequence of a third member of the heat shock protein family in Plasmodium falciparum.</title>
        <authorList>
            <person name="Kun J."/>
            <person name="Mueller-Hill B."/>
        </authorList>
    </citation>
    <scope>NUCLEOTIDE SEQUENCE [GENOMIC DNA]</scope>
</reference>
<proteinExistence type="inferred from homology"/>
<feature type="chain" id="PRO_0000078312" description="Heat shock 70 kDa protein PPF203">
    <location>
        <begin position="1" status="less than"/>
        <end position="201" status="greater than"/>
    </location>
</feature>
<feature type="non-terminal residue">
    <location>
        <position position="1"/>
    </location>
</feature>
<feature type="non-terminal residue">
    <location>
        <position position="201"/>
    </location>
</feature>
<comment type="similarity">
    <text evidence="1">Belongs to the heat shock protein 70 family.</text>
</comment>
<dbReference type="EMBL" id="X15292">
    <property type="protein sequence ID" value="CAA33365.1"/>
    <property type="molecule type" value="Genomic_DNA"/>
</dbReference>
<dbReference type="PIR" id="S05436">
    <property type="entry name" value="S05436"/>
</dbReference>
<dbReference type="SMR" id="P12078"/>
<dbReference type="EnsemblProtists" id="CZT62759">
    <property type="protein sequence ID" value="CZT62759"/>
    <property type="gene ID" value="PF3D7_0831700"/>
</dbReference>
<dbReference type="VEuPathDB" id="PlasmoDB:PF3D7_0831700"/>
<dbReference type="VEuPathDB" id="PlasmoDB:Pf7G8-2_000246500"/>
<dbReference type="VEuPathDB" id="PlasmoDB:Pf7G8_080036600"/>
<dbReference type="VEuPathDB" id="PlasmoDB:PfCD01_080037100"/>
<dbReference type="VEuPathDB" id="PlasmoDB:PfDd2_080024100"/>
<dbReference type="VEuPathDB" id="PlasmoDB:PfGA01_080035000"/>
<dbReference type="VEuPathDB" id="PlasmoDB:PfGB4_080036200"/>
<dbReference type="VEuPathDB" id="PlasmoDB:PfGN01_080037100"/>
<dbReference type="VEuPathDB" id="PlasmoDB:PfHB3_080036800"/>
<dbReference type="VEuPathDB" id="PlasmoDB:PfIT_080036400"/>
<dbReference type="VEuPathDB" id="PlasmoDB:PfKE01_080037100"/>
<dbReference type="VEuPathDB" id="PlasmoDB:PfKH01_080036600"/>
<dbReference type="VEuPathDB" id="PlasmoDB:PfKH02_080036900"/>
<dbReference type="VEuPathDB" id="PlasmoDB:PfML01_080037300"/>
<dbReference type="VEuPathDB" id="PlasmoDB:PfNF135_000037700"/>
<dbReference type="VEuPathDB" id="PlasmoDB:PfNF166_080035000"/>
<dbReference type="VEuPathDB" id="PlasmoDB:PfNF54_080035100"/>
<dbReference type="VEuPathDB" id="PlasmoDB:PfSD01_080036700"/>
<dbReference type="VEuPathDB" id="PlasmoDB:PfSN01_080036100"/>
<dbReference type="VEuPathDB" id="PlasmoDB:PfTG01_080037300"/>
<dbReference type="GO" id="GO:0005524">
    <property type="term" value="F:ATP binding"/>
    <property type="evidence" value="ECO:0007669"/>
    <property type="project" value="UniProtKB-KW"/>
</dbReference>
<dbReference type="GO" id="GO:0140662">
    <property type="term" value="F:ATP-dependent protein folding chaperone"/>
    <property type="evidence" value="ECO:0007669"/>
    <property type="project" value="InterPro"/>
</dbReference>
<dbReference type="FunFam" id="2.60.34.10:FF:000002">
    <property type="entry name" value="Heat shock 70 kDa"/>
    <property type="match status" value="1"/>
</dbReference>
<dbReference type="Gene3D" id="1.20.1270.10">
    <property type="match status" value="1"/>
</dbReference>
<dbReference type="Gene3D" id="2.60.34.10">
    <property type="entry name" value="Substrate Binding Domain Of DNAk, Chain A, domain 1"/>
    <property type="match status" value="1"/>
</dbReference>
<dbReference type="InterPro" id="IPR029048">
    <property type="entry name" value="HSP70_C_sf"/>
</dbReference>
<dbReference type="InterPro" id="IPR029047">
    <property type="entry name" value="HSP70_peptide-bd_sf"/>
</dbReference>
<dbReference type="InterPro" id="IPR013126">
    <property type="entry name" value="Hsp_70_fam"/>
</dbReference>
<dbReference type="PANTHER" id="PTHR19375">
    <property type="entry name" value="HEAT SHOCK PROTEIN 70KDA"/>
    <property type="match status" value="1"/>
</dbReference>
<dbReference type="Pfam" id="PF00012">
    <property type="entry name" value="HSP70"/>
    <property type="match status" value="1"/>
</dbReference>
<dbReference type="SUPFAM" id="SSF100934">
    <property type="entry name" value="Heat shock protein 70kD (HSP70), C-terminal subdomain"/>
    <property type="match status" value="1"/>
</dbReference>
<dbReference type="SUPFAM" id="SSF100920">
    <property type="entry name" value="Heat shock protein 70kD (HSP70), peptide-binding domain"/>
    <property type="match status" value="1"/>
</dbReference>
<keyword id="KW-0067">ATP-binding</keyword>
<keyword id="KW-0547">Nucleotide-binding</keyword>
<keyword id="KW-0346">Stress response</keyword>